<reference key="1">
    <citation type="submission" date="2009-03" db="EMBL/GenBank/DDBJ databases">
        <title>Complete genome sequence of Edwardsiella ictaluri 93-146.</title>
        <authorList>
            <person name="Williams M.L."/>
            <person name="Gillaspy A.F."/>
            <person name="Dyer D.W."/>
            <person name="Thune R.L."/>
            <person name="Waldbieser G.C."/>
            <person name="Schuster S.C."/>
            <person name="Gipson J."/>
            <person name="Zaitshik J."/>
            <person name="Landry C."/>
            <person name="Lawrence M.L."/>
        </authorList>
    </citation>
    <scope>NUCLEOTIDE SEQUENCE [LARGE SCALE GENOMIC DNA]</scope>
    <source>
        <strain>93-146</strain>
    </source>
</reference>
<evidence type="ECO:0000255" key="1">
    <source>
        <dbReference type="HAMAP-Rule" id="MF_00318"/>
    </source>
</evidence>
<feature type="chain" id="PRO_1000205092" description="Enolase">
    <location>
        <begin position="1"/>
        <end position="433"/>
    </location>
</feature>
<feature type="active site" description="Proton donor" evidence="1">
    <location>
        <position position="209"/>
    </location>
</feature>
<feature type="active site" description="Proton acceptor" evidence="1">
    <location>
        <position position="343"/>
    </location>
</feature>
<feature type="binding site" evidence="1">
    <location>
        <position position="167"/>
    </location>
    <ligand>
        <name>(2R)-2-phosphoglycerate</name>
        <dbReference type="ChEBI" id="CHEBI:58289"/>
    </ligand>
</feature>
<feature type="binding site" evidence="1">
    <location>
        <position position="246"/>
    </location>
    <ligand>
        <name>Mg(2+)</name>
        <dbReference type="ChEBI" id="CHEBI:18420"/>
    </ligand>
</feature>
<feature type="binding site" evidence="1">
    <location>
        <position position="291"/>
    </location>
    <ligand>
        <name>Mg(2+)</name>
        <dbReference type="ChEBI" id="CHEBI:18420"/>
    </ligand>
</feature>
<feature type="binding site" evidence="1">
    <location>
        <position position="318"/>
    </location>
    <ligand>
        <name>Mg(2+)</name>
        <dbReference type="ChEBI" id="CHEBI:18420"/>
    </ligand>
</feature>
<feature type="binding site" evidence="1">
    <location>
        <position position="343"/>
    </location>
    <ligand>
        <name>(2R)-2-phosphoglycerate</name>
        <dbReference type="ChEBI" id="CHEBI:58289"/>
    </ligand>
</feature>
<feature type="binding site" evidence="1">
    <location>
        <position position="372"/>
    </location>
    <ligand>
        <name>(2R)-2-phosphoglycerate</name>
        <dbReference type="ChEBI" id="CHEBI:58289"/>
    </ligand>
</feature>
<feature type="binding site" evidence="1">
    <location>
        <position position="373"/>
    </location>
    <ligand>
        <name>(2R)-2-phosphoglycerate</name>
        <dbReference type="ChEBI" id="CHEBI:58289"/>
    </ligand>
</feature>
<feature type="binding site" evidence="1">
    <location>
        <position position="394"/>
    </location>
    <ligand>
        <name>(2R)-2-phosphoglycerate</name>
        <dbReference type="ChEBI" id="CHEBI:58289"/>
    </ligand>
</feature>
<organism>
    <name type="scientific">Edwardsiella ictaluri (strain 93-146)</name>
    <dbReference type="NCBI Taxonomy" id="634503"/>
    <lineage>
        <taxon>Bacteria</taxon>
        <taxon>Pseudomonadati</taxon>
        <taxon>Pseudomonadota</taxon>
        <taxon>Gammaproteobacteria</taxon>
        <taxon>Enterobacterales</taxon>
        <taxon>Hafniaceae</taxon>
        <taxon>Edwardsiella</taxon>
    </lineage>
</organism>
<accession>C5B8X2</accession>
<protein>
    <recommendedName>
        <fullName evidence="1">Enolase</fullName>
        <ecNumber evidence="1">4.2.1.11</ecNumber>
    </recommendedName>
    <alternativeName>
        <fullName evidence="1">2-phospho-D-glycerate hydro-lyase</fullName>
    </alternativeName>
    <alternativeName>
        <fullName evidence="1">2-phosphoglycerate dehydratase</fullName>
    </alternativeName>
</protein>
<comment type="function">
    <text evidence="1">Catalyzes the reversible conversion of 2-phosphoglycerate (2-PG) into phosphoenolpyruvate (PEP). It is essential for the degradation of carbohydrates via glycolysis.</text>
</comment>
<comment type="catalytic activity">
    <reaction evidence="1">
        <text>(2R)-2-phosphoglycerate = phosphoenolpyruvate + H2O</text>
        <dbReference type="Rhea" id="RHEA:10164"/>
        <dbReference type="ChEBI" id="CHEBI:15377"/>
        <dbReference type="ChEBI" id="CHEBI:58289"/>
        <dbReference type="ChEBI" id="CHEBI:58702"/>
        <dbReference type="EC" id="4.2.1.11"/>
    </reaction>
</comment>
<comment type="cofactor">
    <cofactor evidence="1">
        <name>Mg(2+)</name>
        <dbReference type="ChEBI" id="CHEBI:18420"/>
    </cofactor>
    <text evidence="1">Binds a second Mg(2+) ion via substrate during catalysis.</text>
</comment>
<comment type="pathway">
    <text evidence="1">Carbohydrate degradation; glycolysis; pyruvate from D-glyceraldehyde 3-phosphate: step 4/5.</text>
</comment>
<comment type="subunit">
    <text evidence="1">Component of the RNA degradosome, a multiprotein complex involved in RNA processing and mRNA degradation.</text>
</comment>
<comment type="subcellular location">
    <subcellularLocation>
        <location evidence="1">Cytoplasm</location>
    </subcellularLocation>
    <subcellularLocation>
        <location evidence="1">Secreted</location>
    </subcellularLocation>
    <subcellularLocation>
        <location evidence="1">Cell surface</location>
    </subcellularLocation>
    <text evidence="1">Fractions of enolase are present in both the cytoplasm and on the cell surface.</text>
</comment>
<comment type="similarity">
    <text evidence="1">Belongs to the enolase family.</text>
</comment>
<dbReference type="EC" id="4.2.1.11" evidence="1"/>
<dbReference type="EMBL" id="CP001600">
    <property type="protein sequence ID" value="ACR70175.1"/>
    <property type="molecule type" value="Genomic_DNA"/>
</dbReference>
<dbReference type="RefSeq" id="WP_015872265.1">
    <property type="nucleotide sequence ID" value="NZ_CP169062.1"/>
</dbReference>
<dbReference type="SMR" id="C5B8X2"/>
<dbReference type="STRING" id="67780.B6E78_06980"/>
<dbReference type="GeneID" id="69539897"/>
<dbReference type="KEGG" id="eic:NT01EI_3022"/>
<dbReference type="PATRIC" id="fig|634503.3.peg.2702"/>
<dbReference type="HOGENOM" id="CLU_031223_2_1_6"/>
<dbReference type="OrthoDB" id="9804716at2"/>
<dbReference type="UniPathway" id="UPA00109">
    <property type="reaction ID" value="UER00187"/>
</dbReference>
<dbReference type="Proteomes" id="UP000001485">
    <property type="component" value="Chromosome"/>
</dbReference>
<dbReference type="GO" id="GO:0009986">
    <property type="term" value="C:cell surface"/>
    <property type="evidence" value="ECO:0007669"/>
    <property type="project" value="UniProtKB-SubCell"/>
</dbReference>
<dbReference type="GO" id="GO:0005576">
    <property type="term" value="C:extracellular region"/>
    <property type="evidence" value="ECO:0007669"/>
    <property type="project" value="UniProtKB-SubCell"/>
</dbReference>
<dbReference type="GO" id="GO:0000015">
    <property type="term" value="C:phosphopyruvate hydratase complex"/>
    <property type="evidence" value="ECO:0007669"/>
    <property type="project" value="InterPro"/>
</dbReference>
<dbReference type="GO" id="GO:0000287">
    <property type="term" value="F:magnesium ion binding"/>
    <property type="evidence" value="ECO:0007669"/>
    <property type="project" value="UniProtKB-UniRule"/>
</dbReference>
<dbReference type="GO" id="GO:0004634">
    <property type="term" value="F:phosphopyruvate hydratase activity"/>
    <property type="evidence" value="ECO:0007669"/>
    <property type="project" value="UniProtKB-UniRule"/>
</dbReference>
<dbReference type="GO" id="GO:0006096">
    <property type="term" value="P:glycolytic process"/>
    <property type="evidence" value="ECO:0007669"/>
    <property type="project" value="UniProtKB-UniRule"/>
</dbReference>
<dbReference type="CDD" id="cd03313">
    <property type="entry name" value="enolase"/>
    <property type="match status" value="1"/>
</dbReference>
<dbReference type="FunFam" id="3.20.20.120:FF:000001">
    <property type="entry name" value="Enolase"/>
    <property type="match status" value="1"/>
</dbReference>
<dbReference type="FunFam" id="3.30.390.10:FF:000001">
    <property type="entry name" value="Enolase"/>
    <property type="match status" value="1"/>
</dbReference>
<dbReference type="Gene3D" id="3.20.20.120">
    <property type="entry name" value="Enolase-like C-terminal domain"/>
    <property type="match status" value="1"/>
</dbReference>
<dbReference type="Gene3D" id="3.30.390.10">
    <property type="entry name" value="Enolase-like, N-terminal domain"/>
    <property type="match status" value="1"/>
</dbReference>
<dbReference type="HAMAP" id="MF_00318">
    <property type="entry name" value="Enolase"/>
    <property type="match status" value="1"/>
</dbReference>
<dbReference type="InterPro" id="IPR000941">
    <property type="entry name" value="Enolase"/>
</dbReference>
<dbReference type="InterPro" id="IPR036849">
    <property type="entry name" value="Enolase-like_C_sf"/>
</dbReference>
<dbReference type="InterPro" id="IPR029017">
    <property type="entry name" value="Enolase-like_N"/>
</dbReference>
<dbReference type="InterPro" id="IPR020810">
    <property type="entry name" value="Enolase_C"/>
</dbReference>
<dbReference type="InterPro" id="IPR020809">
    <property type="entry name" value="Enolase_CS"/>
</dbReference>
<dbReference type="InterPro" id="IPR020811">
    <property type="entry name" value="Enolase_N"/>
</dbReference>
<dbReference type="NCBIfam" id="TIGR01060">
    <property type="entry name" value="eno"/>
    <property type="match status" value="1"/>
</dbReference>
<dbReference type="PANTHER" id="PTHR11902">
    <property type="entry name" value="ENOLASE"/>
    <property type="match status" value="1"/>
</dbReference>
<dbReference type="PANTHER" id="PTHR11902:SF1">
    <property type="entry name" value="ENOLASE"/>
    <property type="match status" value="1"/>
</dbReference>
<dbReference type="Pfam" id="PF00113">
    <property type="entry name" value="Enolase_C"/>
    <property type="match status" value="1"/>
</dbReference>
<dbReference type="Pfam" id="PF03952">
    <property type="entry name" value="Enolase_N"/>
    <property type="match status" value="1"/>
</dbReference>
<dbReference type="PIRSF" id="PIRSF001400">
    <property type="entry name" value="Enolase"/>
    <property type="match status" value="1"/>
</dbReference>
<dbReference type="PRINTS" id="PR00148">
    <property type="entry name" value="ENOLASE"/>
</dbReference>
<dbReference type="SFLD" id="SFLDS00001">
    <property type="entry name" value="Enolase"/>
    <property type="match status" value="1"/>
</dbReference>
<dbReference type="SFLD" id="SFLDF00002">
    <property type="entry name" value="enolase"/>
    <property type="match status" value="1"/>
</dbReference>
<dbReference type="SMART" id="SM01192">
    <property type="entry name" value="Enolase_C"/>
    <property type="match status" value="1"/>
</dbReference>
<dbReference type="SMART" id="SM01193">
    <property type="entry name" value="Enolase_N"/>
    <property type="match status" value="1"/>
</dbReference>
<dbReference type="SUPFAM" id="SSF51604">
    <property type="entry name" value="Enolase C-terminal domain-like"/>
    <property type="match status" value="1"/>
</dbReference>
<dbReference type="SUPFAM" id="SSF54826">
    <property type="entry name" value="Enolase N-terminal domain-like"/>
    <property type="match status" value="1"/>
</dbReference>
<dbReference type="PROSITE" id="PS00164">
    <property type="entry name" value="ENOLASE"/>
    <property type="match status" value="1"/>
</dbReference>
<gene>
    <name evidence="1" type="primary">eno</name>
    <name type="ordered locus">NT01EI_3022</name>
</gene>
<sequence length="433" mass="45746">MSKIVKVIGREIIDSRGNPTVEAEVHLEGGFVGMAAAPSGASTGSREALELRDGDKSRFLGKGVLKAVSAVNGPIAEVIIGKDAKDQANIDQIMIELDGTENKSKFGANAILAVSLANAKAAAAAKGMPLYAHIAELNGTPGKYSMPLPMMNIINGGEHADNNVDIQEFMIQPVGAKTLKEAVRIGSEVFHNLAKVLKSKGMNTAVGDEGGYAPNLESNAAALAAIKEAVEKAGYVLGKDVTLAMDCAASEFYNKETGMYELKGEGKSFTSNEFTHYLEGLTKEYPIVSIEDGLDESDWDGFAYQTKVMGGKLQLVGDDLFVTNTKILKEGIEKGIANSILIKFNQIGSLTETLAAIKMAKDAGYTAVISHRSGETEDATIADLAVGTAAGQIKTGSMSRSDRVAKYNQLIRIEEALGAAAPFNGLKEVKGQH</sequence>
<name>ENO_EDWI9</name>
<keyword id="KW-0963">Cytoplasm</keyword>
<keyword id="KW-0324">Glycolysis</keyword>
<keyword id="KW-0456">Lyase</keyword>
<keyword id="KW-0460">Magnesium</keyword>
<keyword id="KW-0479">Metal-binding</keyword>
<keyword id="KW-0964">Secreted</keyword>
<proteinExistence type="inferred from homology"/>